<feature type="transit peptide" description="Mitochondrion" evidence="1">
    <location>
        <begin position="1"/>
        <end position="47"/>
    </location>
</feature>
<feature type="chain" id="PRO_0000342821" description="Pentatricopeptide repeat-containing protein At1g53600, mitochondrial">
    <location>
        <begin position="48"/>
        <end position="717"/>
    </location>
</feature>
<feature type="repeat" description="PPR 1">
    <location>
        <begin position="49"/>
        <end position="79"/>
    </location>
</feature>
<feature type="repeat" description="PPR 2">
    <location>
        <begin position="80"/>
        <end position="110"/>
    </location>
</feature>
<feature type="repeat" description="PPR 3">
    <location>
        <begin position="111"/>
        <end position="142"/>
    </location>
</feature>
<feature type="repeat" description="PPR 4">
    <location>
        <begin position="143"/>
        <end position="173"/>
    </location>
</feature>
<feature type="repeat" description="PPR 5">
    <location>
        <begin position="176"/>
        <end position="206"/>
    </location>
</feature>
<feature type="repeat" description="PPR 6">
    <location>
        <begin position="207"/>
        <end position="241"/>
    </location>
</feature>
<feature type="repeat" description="PPR 7">
    <location>
        <begin position="242"/>
        <end position="272"/>
    </location>
</feature>
<feature type="repeat" description="PPR 8">
    <location>
        <begin position="274"/>
        <end position="308"/>
    </location>
</feature>
<feature type="repeat" description="PPR 9">
    <location>
        <begin position="309"/>
        <end position="339"/>
    </location>
</feature>
<feature type="repeat" description="PPR 10">
    <location>
        <begin position="340"/>
        <end position="374"/>
    </location>
</feature>
<feature type="repeat" description="PPR 11">
    <location>
        <begin position="375"/>
        <end position="401"/>
    </location>
</feature>
<feature type="repeat" description="PPR 12">
    <location>
        <begin position="402"/>
        <end position="436"/>
    </location>
</feature>
<feature type="repeat" description="PPR 13">
    <location>
        <begin position="437"/>
        <end position="471"/>
    </location>
</feature>
<feature type="repeat" description="PPR 14">
    <location>
        <begin position="472"/>
        <end position="502"/>
    </location>
</feature>
<feature type="repeat" description="PPR 15">
    <location>
        <begin position="503"/>
        <end position="537"/>
    </location>
</feature>
<feature type="repeat" description="PPR 16">
    <location>
        <begin position="538"/>
        <end position="568"/>
    </location>
</feature>
<feature type="repeat" description="PPR 17">
    <location>
        <begin position="574"/>
        <end position="604"/>
    </location>
</feature>
<feature type="region of interest" description="Type E motif">
    <location>
        <begin position="609"/>
        <end position="684"/>
    </location>
</feature>
<feature type="region of interest" description="Type E(+) motif">
    <location>
        <begin position="685"/>
        <end position="715"/>
    </location>
</feature>
<reference key="1">
    <citation type="journal article" date="2000" name="Nature">
        <title>Sequence and analysis of chromosome 1 of the plant Arabidopsis thaliana.</title>
        <authorList>
            <person name="Theologis A."/>
            <person name="Ecker J.R."/>
            <person name="Palm C.J."/>
            <person name="Federspiel N.A."/>
            <person name="Kaul S."/>
            <person name="White O."/>
            <person name="Alonso J."/>
            <person name="Altafi H."/>
            <person name="Araujo R."/>
            <person name="Bowman C.L."/>
            <person name="Brooks S.Y."/>
            <person name="Buehler E."/>
            <person name="Chan A."/>
            <person name="Chao Q."/>
            <person name="Chen H."/>
            <person name="Cheuk R.F."/>
            <person name="Chin C.W."/>
            <person name="Chung M.K."/>
            <person name="Conn L."/>
            <person name="Conway A.B."/>
            <person name="Conway A.R."/>
            <person name="Creasy T.H."/>
            <person name="Dewar K."/>
            <person name="Dunn P."/>
            <person name="Etgu P."/>
            <person name="Feldblyum T.V."/>
            <person name="Feng J.-D."/>
            <person name="Fong B."/>
            <person name="Fujii C.Y."/>
            <person name="Gill J.E."/>
            <person name="Goldsmith A.D."/>
            <person name="Haas B."/>
            <person name="Hansen N.F."/>
            <person name="Hughes B."/>
            <person name="Huizar L."/>
            <person name="Hunter J.L."/>
            <person name="Jenkins J."/>
            <person name="Johnson-Hopson C."/>
            <person name="Khan S."/>
            <person name="Khaykin E."/>
            <person name="Kim C.J."/>
            <person name="Koo H.L."/>
            <person name="Kremenetskaia I."/>
            <person name="Kurtz D.B."/>
            <person name="Kwan A."/>
            <person name="Lam B."/>
            <person name="Langin-Hooper S."/>
            <person name="Lee A."/>
            <person name="Lee J.M."/>
            <person name="Lenz C.A."/>
            <person name="Li J.H."/>
            <person name="Li Y.-P."/>
            <person name="Lin X."/>
            <person name="Liu S.X."/>
            <person name="Liu Z.A."/>
            <person name="Luros J.S."/>
            <person name="Maiti R."/>
            <person name="Marziali A."/>
            <person name="Militscher J."/>
            <person name="Miranda M."/>
            <person name="Nguyen M."/>
            <person name="Nierman W.C."/>
            <person name="Osborne B.I."/>
            <person name="Pai G."/>
            <person name="Peterson J."/>
            <person name="Pham P.K."/>
            <person name="Rizzo M."/>
            <person name="Rooney T."/>
            <person name="Rowley D."/>
            <person name="Sakano H."/>
            <person name="Salzberg S.L."/>
            <person name="Schwartz J.R."/>
            <person name="Shinn P."/>
            <person name="Southwick A.M."/>
            <person name="Sun H."/>
            <person name="Tallon L.J."/>
            <person name="Tambunga G."/>
            <person name="Toriumi M.J."/>
            <person name="Town C.D."/>
            <person name="Utterback T."/>
            <person name="Van Aken S."/>
            <person name="Vaysberg M."/>
            <person name="Vysotskaia V.S."/>
            <person name="Walker M."/>
            <person name="Wu D."/>
            <person name="Yu G."/>
            <person name="Fraser C.M."/>
            <person name="Venter J.C."/>
            <person name="Davis R.W."/>
        </authorList>
    </citation>
    <scope>NUCLEOTIDE SEQUENCE [LARGE SCALE GENOMIC DNA]</scope>
    <source>
        <strain>cv. Columbia</strain>
    </source>
</reference>
<reference key="2">
    <citation type="journal article" date="2017" name="Plant J.">
        <title>Araport11: a complete reannotation of the Arabidopsis thaliana reference genome.</title>
        <authorList>
            <person name="Cheng C.Y."/>
            <person name="Krishnakumar V."/>
            <person name="Chan A.P."/>
            <person name="Thibaud-Nissen F."/>
            <person name="Schobel S."/>
            <person name="Town C.D."/>
        </authorList>
    </citation>
    <scope>GENOME REANNOTATION</scope>
    <source>
        <strain>cv. Columbia</strain>
    </source>
</reference>
<reference key="3">
    <citation type="journal article" date="2004" name="Plant Cell">
        <title>Genome-wide analysis of Arabidopsis pentatricopeptide repeat proteins reveals their essential role in organelle biogenesis.</title>
        <authorList>
            <person name="Lurin C."/>
            <person name="Andres C."/>
            <person name="Aubourg S."/>
            <person name="Bellaoui M."/>
            <person name="Bitton F."/>
            <person name="Bruyere C."/>
            <person name="Caboche M."/>
            <person name="Debast C."/>
            <person name="Gualberto J."/>
            <person name="Hoffmann B."/>
            <person name="Lecharny A."/>
            <person name="Le Ret M."/>
            <person name="Martin-Magniette M.-L."/>
            <person name="Mireau H."/>
            <person name="Peeters N."/>
            <person name="Renou J.-P."/>
            <person name="Szurek B."/>
            <person name="Taconnat L."/>
            <person name="Small I."/>
        </authorList>
    </citation>
    <scope>GENE FAMILY</scope>
</reference>
<protein>
    <recommendedName>
        <fullName>Pentatricopeptide repeat-containing protein At1g53600, mitochondrial</fullName>
    </recommendedName>
</protein>
<gene>
    <name type="primary">PCMP-E63</name>
    <name type="ordered locus">At1g53600</name>
    <name type="ORF">F22G10.27</name>
    <name type="ORF">T3F20.9</name>
</gene>
<comment type="subcellular location">
    <subcellularLocation>
        <location evidence="2">Mitochondrion</location>
    </subcellularLocation>
</comment>
<comment type="similarity">
    <text evidence="2">Belongs to the PPR family. PCMP-E subfamily.</text>
</comment>
<comment type="sequence caution" evidence="2">
    <conflict type="erroneous gene model prediction">
        <sequence resource="EMBL-CDS" id="AAF78430"/>
    </conflict>
</comment>
<comment type="sequence caution" evidence="2">
    <conflict type="erroneous gene model prediction">
        <sequence resource="EMBL-CDS" id="AAG51982"/>
    </conflict>
</comment>
<comment type="online information" name="Pentatricopeptide repeat proteins">
    <link uri="https://ppr.plantenergy.uwa.edu.au"/>
</comment>
<proteinExistence type="evidence at transcript level"/>
<evidence type="ECO:0000255" key="1"/>
<evidence type="ECO:0000305" key="2"/>
<accession>Q9C8L6</accession>
<accession>Q9LPH5</accession>
<keyword id="KW-0496">Mitochondrion</keyword>
<keyword id="KW-1185">Reference proteome</keyword>
<keyword id="KW-0677">Repeat</keyword>
<keyword id="KW-0809">Transit peptide</keyword>
<dbReference type="EMBL" id="AC018748">
    <property type="protein sequence ID" value="AAF78430.1"/>
    <property type="status" value="ALT_SEQ"/>
    <property type="molecule type" value="Genomic_DNA"/>
</dbReference>
<dbReference type="EMBL" id="AC024260">
    <property type="protein sequence ID" value="AAG51982.1"/>
    <property type="status" value="ALT_SEQ"/>
    <property type="molecule type" value="Genomic_DNA"/>
</dbReference>
<dbReference type="EMBL" id="CP002684">
    <property type="protein sequence ID" value="AEE32968.1"/>
    <property type="molecule type" value="Genomic_DNA"/>
</dbReference>
<dbReference type="EMBL" id="CP002684">
    <property type="protein sequence ID" value="ANM58842.1"/>
    <property type="molecule type" value="Genomic_DNA"/>
</dbReference>
<dbReference type="PIR" id="B96576">
    <property type="entry name" value="B96576"/>
</dbReference>
<dbReference type="RefSeq" id="NP_001321251.1">
    <property type="nucleotide sequence ID" value="NM_001333599.1"/>
</dbReference>
<dbReference type="RefSeq" id="NP_175765.2">
    <property type="nucleotide sequence ID" value="NM_104238.3"/>
</dbReference>
<dbReference type="SMR" id="Q9C8L6"/>
<dbReference type="FunCoup" id="Q9C8L6">
    <property type="interactions" value="575"/>
</dbReference>
<dbReference type="iPTMnet" id="Q9C8L6"/>
<dbReference type="PaxDb" id="3702-AT1G53600.1"/>
<dbReference type="ProteomicsDB" id="226467"/>
<dbReference type="EnsemblPlants" id="AT1G53600.1">
    <property type="protein sequence ID" value="AT1G53600.1"/>
    <property type="gene ID" value="AT1G53600"/>
</dbReference>
<dbReference type="EnsemblPlants" id="AT1G53600.2">
    <property type="protein sequence ID" value="AT1G53600.2"/>
    <property type="gene ID" value="AT1G53600"/>
</dbReference>
<dbReference type="GeneID" id="841795"/>
<dbReference type="Gramene" id="AT1G53600.1">
    <property type="protein sequence ID" value="AT1G53600.1"/>
    <property type="gene ID" value="AT1G53600"/>
</dbReference>
<dbReference type="Gramene" id="AT1G53600.2">
    <property type="protein sequence ID" value="AT1G53600.2"/>
    <property type="gene ID" value="AT1G53600"/>
</dbReference>
<dbReference type="KEGG" id="ath:AT1G53600"/>
<dbReference type="Araport" id="AT1G53600"/>
<dbReference type="TAIR" id="AT1G53600"/>
<dbReference type="eggNOG" id="KOG4197">
    <property type="taxonomic scope" value="Eukaryota"/>
</dbReference>
<dbReference type="HOGENOM" id="CLU_002706_30_4_1"/>
<dbReference type="InParanoid" id="Q9C8L6"/>
<dbReference type="OMA" id="FEACGRF"/>
<dbReference type="PhylomeDB" id="Q9C8L6"/>
<dbReference type="PRO" id="PR:Q9C8L6"/>
<dbReference type="Proteomes" id="UP000006548">
    <property type="component" value="Chromosome 1"/>
</dbReference>
<dbReference type="ExpressionAtlas" id="Q9C8L6">
    <property type="expression patterns" value="baseline and differential"/>
</dbReference>
<dbReference type="GO" id="GO:0005739">
    <property type="term" value="C:mitochondrion"/>
    <property type="evidence" value="ECO:0007669"/>
    <property type="project" value="UniProtKB-SubCell"/>
</dbReference>
<dbReference type="GO" id="GO:0003723">
    <property type="term" value="F:RNA binding"/>
    <property type="evidence" value="ECO:0007669"/>
    <property type="project" value="InterPro"/>
</dbReference>
<dbReference type="GO" id="GO:0009451">
    <property type="term" value="P:RNA modification"/>
    <property type="evidence" value="ECO:0007669"/>
    <property type="project" value="InterPro"/>
</dbReference>
<dbReference type="FunFam" id="1.25.40.10:FF:003304">
    <property type="entry name" value="Pentatricopeptide repeat-containing protein At1g53600, mitochondrial"/>
    <property type="match status" value="1"/>
</dbReference>
<dbReference type="FunFam" id="1.25.40.10:FF:001176">
    <property type="entry name" value="Pentatricopeptide repeat-containing protein At2g35030, mitochondrial"/>
    <property type="match status" value="1"/>
</dbReference>
<dbReference type="FunFam" id="1.25.40.10:FF:001212">
    <property type="entry name" value="Pentatricopeptide repeat-containing protein mitochondrial"/>
    <property type="match status" value="1"/>
</dbReference>
<dbReference type="FunFam" id="1.25.40.10:FF:000606">
    <property type="entry name" value="Putative pentatricopeptide repeat-containing protein"/>
    <property type="match status" value="1"/>
</dbReference>
<dbReference type="Gene3D" id="1.25.40.10">
    <property type="entry name" value="Tetratricopeptide repeat domain"/>
    <property type="match status" value="5"/>
</dbReference>
<dbReference type="InterPro" id="IPR046848">
    <property type="entry name" value="E_motif"/>
</dbReference>
<dbReference type="InterPro" id="IPR002885">
    <property type="entry name" value="Pentatricopeptide_rpt"/>
</dbReference>
<dbReference type="InterPro" id="IPR046960">
    <property type="entry name" value="PPR_At4g14850-like_plant"/>
</dbReference>
<dbReference type="InterPro" id="IPR011990">
    <property type="entry name" value="TPR-like_helical_dom_sf"/>
</dbReference>
<dbReference type="NCBIfam" id="TIGR00756">
    <property type="entry name" value="PPR"/>
    <property type="match status" value="9"/>
</dbReference>
<dbReference type="PANTHER" id="PTHR47926">
    <property type="entry name" value="PENTATRICOPEPTIDE REPEAT-CONTAINING PROTEIN"/>
    <property type="match status" value="1"/>
</dbReference>
<dbReference type="Pfam" id="PF20431">
    <property type="entry name" value="E_motif"/>
    <property type="match status" value="1"/>
</dbReference>
<dbReference type="Pfam" id="PF01535">
    <property type="entry name" value="PPR"/>
    <property type="match status" value="8"/>
</dbReference>
<dbReference type="Pfam" id="PF12854">
    <property type="entry name" value="PPR_1"/>
    <property type="match status" value="1"/>
</dbReference>
<dbReference type="Pfam" id="PF13041">
    <property type="entry name" value="PPR_2"/>
    <property type="match status" value="3"/>
</dbReference>
<dbReference type="SUPFAM" id="SSF48452">
    <property type="entry name" value="TPR-like"/>
    <property type="match status" value="1"/>
</dbReference>
<dbReference type="PROSITE" id="PS51375">
    <property type="entry name" value="PPR"/>
    <property type="match status" value="16"/>
</dbReference>
<organism>
    <name type="scientific">Arabidopsis thaliana</name>
    <name type="common">Mouse-ear cress</name>
    <dbReference type="NCBI Taxonomy" id="3702"/>
    <lineage>
        <taxon>Eukaryota</taxon>
        <taxon>Viridiplantae</taxon>
        <taxon>Streptophyta</taxon>
        <taxon>Embryophyta</taxon>
        <taxon>Tracheophyta</taxon>
        <taxon>Spermatophyta</taxon>
        <taxon>Magnoliopsida</taxon>
        <taxon>eudicotyledons</taxon>
        <taxon>Gunneridae</taxon>
        <taxon>Pentapetalae</taxon>
        <taxon>rosids</taxon>
        <taxon>malvids</taxon>
        <taxon>Brassicales</taxon>
        <taxon>Brassicaceae</taxon>
        <taxon>Camelineae</taxon>
        <taxon>Arabidopsis</taxon>
    </lineage>
</organism>
<name>PPR80_ARATH</name>
<sequence>MVMRPISNKGLIYRHNICLRCNSTLAVSNHEPITQKTRNFLETTTTSTAIFQCNSQISKHARNGNLQEAEAIFRQMSNRSIVSWIAMISAYAENGKMSKAWQVFDEMPVRVTTSYNAMITAMIKNKCDLGKAYELFCDIPEKNAVSYATMITGFVRAGRFDEAEFLYAETPVKFRDSVASNVLLSGYLRAGKWNEAVRVFQGMAVKEVVSCSSMVHGYCKMGRIVDARSLFDRMTERNVITWTAMIDGYFKAGFFEDGFGLFLRMRQEGDVKVNSNTLAVMFKACRDFVRYREGSQIHGLVSRMPLEFDLFLGNSLMSMYSKLGYMGEAKAVFGVMKNKDSVSWNSLITGLVQRKQISEAYELFEKMPGKDMVSWTDMIKGFSGKGEISKCVELFGMMPEKDNITWTAMISAFVSNGYYEEALCWFHKMLQKEVCPNSYTFSSVLSATASLADLIEGLQIHGRVVKMNIVNDLSVQNSLVSMYCKCGNTNDAYKIFSCISEPNIVSYNTMISGYSYNGFGKKALKLFSMLESSGKEPNGVTFLALLSACVHVGYVDLGWKYFKSMKSSYNIEPGPDHYACMVDLLGRSGLLDDASNLISTMPCKPHSGVWGSLLSASKTHLRVDLAELAAKKLIELEPDSATPYVVLSQLYSIIGKNRDCDRIMNIKKSKRIKKDPGSSWIILKGEVHNFLAGDESQLNLEEIGFTLKMIRKEMELI</sequence>